<feature type="chain" id="PRO_1000191833" description="NAD-capped RNA hydrolase NudC">
    <location>
        <begin position="1"/>
        <end position="257"/>
    </location>
</feature>
<feature type="domain" description="Nudix hydrolase" evidence="1">
    <location>
        <begin position="125"/>
        <end position="248"/>
    </location>
</feature>
<feature type="short sequence motif" description="Nudix box" evidence="1">
    <location>
        <begin position="159"/>
        <end position="180"/>
    </location>
</feature>
<feature type="binding site" evidence="1">
    <location>
        <position position="25"/>
    </location>
    <ligand>
        <name>substrate</name>
    </ligand>
</feature>
<feature type="binding site" evidence="1">
    <location>
        <position position="69"/>
    </location>
    <ligand>
        <name>substrate</name>
    </ligand>
</feature>
<feature type="binding site" evidence="1">
    <location>
        <position position="98"/>
    </location>
    <ligand>
        <name>Zn(2+)</name>
        <dbReference type="ChEBI" id="CHEBI:29105"/>
    </ligand>
</feature>
<feature type="binding site" evidence="1">
    <location>
        <position position="101"/>
    </location>
    <ligand>
        <name>Zn(2+)</name>
        <dbReference type="ChEBI" id="CHEBI:29105"/>
    </ligand>
</feature>
<feature type="binding site" evidence="1">
    <location>
        <position position="111"/>
    </location>
    <ligand>
        <name>substrate</name>
    </ligand>
</feature>
<feature type="binding site" evidence="1">
    <location>
        <position position="116"/>
    </location>
    <ligand>
        <name>Zn(2+)</name>
        <dbReference type="ChEBI" id="CHEBI:29105"/>
    </ligand>
</feature>
<feature type="binding site" evidence="1">
    <location>
        <position position="119"/>
    </location>
    <ligand>
        <name>Zn(2+)</name>
        <dbReference type="ChEBI" id="CHEBI:29105"/>
    </ligand>
</feature>
<feature type="binding site" evidence="1">
    <location>
        <position position="124"/>
    </location>
    <ligand>
        <name>substrate</name>
    </ligand>
</feature>
<feature type="binding site" evidence="1">
    <location>
        <position position="158"/>
    </location>
    <ligand>
        <name>a divalent metal cation</name>
        <dbReference type="ChEBI" id="CHEBI:60240"/>
        <label>1</label>
    </ligand>
</feature>
<feature type="binding site" evidence="1">
    <location>
        <position position="174"/>
    </location>
    <ligand>
        <name>a divalent metal cation</name>
        <dbReference type="ChEBI" id="CHEBI:60240"/>
        <label>2</label>
    </ligand>
</feature>
<feature type="binding site" evidence="1">
    <location>
        <position position="174"/>
    </location>
    <ligand>
        <name>a divalent metal cation</name>
        <dbReference type="ChEBI" id="CHEBI:60240"/>
        <label>3</label>
    </ligand>
</feature>
<feature type="binding site" evidence="1">
    <location>
        <position position="178"/>
    </location>
    <ligand>
        <name>a divalent metal cation</name>
        <dbReference type="ChEBI" id="CHEBI:60240"/>
        <label>1</label>
    </ligand>
</feature>
<feature type="binding site" evidence="1">
    <location>
        <position position="178"/>
    </location>
    <ligand>
        <name>a divalent metal cation</name>
        <dbReference type="ChEBI" id="CHEBI:60240"/>
        <label>3</label>
    </ligand>
</feature>
<feature type="binding site" evidence="1">
    <location>
        <begin position="192"/>
        <end position="199"/>
    </location>
    <ligand>
        <name>substrate</name>
    </ligand>
</feature>
<feature type="binding site" evidence="1">
    <location>
        <position position="219"/>
    </location>
    <ligand>
        <name>a divalent metal cation</name>
        <dbReference type="ChEBI" id="CHEBI:60240"/>
        <label>1</label>
    </ligand>
</feature>
<feature type="binding site" evidence="1">
    <location>
        <position position="219"/>
    </location>
    <ligand>
        <name>a divalent metal cation</name>
        <dbReference type="ChEBI" id="CHEBI:60240"/>
        <label>3</label>
    </ligand>
</feature>
<feature type="binding site" evidence="1">
    <location>
        <position position="241"/>
    </location>
    <ligand>
        <name>substrate</name>
    </ligand>
</feature>
<protein>
    <recommendedName>
        <fullName evidence="1">NAD-capped RNA hydrolase NudC</fullName>
        <shortName evidence="1">DeNADding enzyme NudC</shortName>
        <ecNumber evidence="1">3.6.1.-</ecNumber>
    </recommendedName>
    <alternativeName>
        <fullName evidence="1">NADH pyrophosphatase</fullName>
        <ecNumber evidence="1">3.6.1.22</ecNumber>
    </alternativeName>
</protein>
<name>NUDC_ECO27</name>
<reference key="1">
    <citation type="journal article" date="2009" name="J. Bacteriol.">
        <title>Complete genome sequence and comparative genome analysis of enteropathogenic Escherichia coli O127:H6 strain E2348/69.</title>
        <authorList>
            <person name="Iguchi A."/>
            <person name="Thomson N.R."/>
            <person name="Ogura Y."/>
            <person name="Saunders D."/>
            <person name="Ooka T."/>
            <person name="Henderson I.R."/>
            <person name="Harris D."/>
            <person name="Asadulghani M."/>
            <person name="Kurokawa K."/>
            <person name="Dean P."/>
            <person name="Kenny B."/>
            <person name="Quail M.A."/>
            <person name="Thurston S."/>
            <person name="Dougan G."/>
            <person name="Hayashi T."/>
            <person name="Parkhill J."/>
            <person name="Frankel G."/>
        </authorList>
    </citation>
    <scope>NUCLEOTIDE SEQUENCE [LARGE SCALE GENOMIC DNA]</scope>
    <source>
        <strain>E2348/69 / EPEC</strain>
    </source>
</reference>
<proteinExistence type="inferred from homology"/>
<accession>B7UPF1</accession>
<sequence length="257" mass="29688">MDRIIEKLDHGWWVVSHEQKLWLPKGELPYGEAANFDLVGQRALQIGEWQGEPVWLVQLQRRHDMGSVRQVIDLDVGLFQLAGRGVQLAEFYRSHKYCGYCGHEMYPSKTEWAMLCSHCRERYYPQIAPCIIVAIRRDDSILLAQHTRHRNGVHTVLAGFVEVGETLEQAVAREVMEESGIKVKNLRYVTSQPWPFPQSLMTAFMAEYDSGEIVIDPKELLEANWYRYDDLPLLPPPGTVARRLIEDTVAMCRAEYE</sequence>
<comment type="function">
    <text evidence="1">mRNA decapping enzyme that specifically removes the nicotinamide adenine dinucleotide (NAD) cap from a subset of mRNAs by hydrolyzing the diphosphate linkage to produce nicotinamide mononucleotide (NMN) and 5' monophosphate mRNA. The NAD-cap is present at the 5'-end of some mRNAs and stabilizes RNA against 5'-processing. Has preference for mRNAs with a 5'-end purine. Catalyzes the hydrolysis of a broad range of dinucleotide pyrophosphates.</text>
</comment>
<comment type="catalytic activity">
    <reaction evidence="1">
        <text>a 5'-end NAD(+)-phospho-ribonucleoside in mRNA + H2O = a 5'-end phospho-adenosine-phospho-ribonucleoside in mRNA + beta-nicotinamide D-ribonucleotide + 2 H(+)</text>
        <dbReference type="Rhea" id="RHEA:60876"/>
        <dbReference type="Rhea" id="RHEA-COMP:15698"/>
        <dbReference type="Rhea" id="RHEA-COMP:15719"/>
        <dbReference type="ChEBI" id="CHEBI:14649"/>
        <dbReference type="ChEBI" id="CHEBI:15377"/>
        <dbReference type="ChEBI" id="CHEBI:15378"/>
        <dbReference type="ChEBI" id="CHEBI:144029"/>
        <dbReference type="ChEBI" id="CHEBI:144051"/>
    </reaction>
    <physiologicalReaction direction="left-to-right" evidence="1">
        <dbReference type="Rhea" id="RHEA:60877"/>
    </physiologicalReaction>
</comment>
<comment type="catalytic activity">
    <reaction evidence="1">
        <text>NAD(+) + H2O = beta-nicotinamide D-ribonucleotide + AMP + 2 H(+)</text>
        <dbReference type="Rhea" id="RHEA:11800"/>
        <dbReference type="ChEBI" id="CHEBI:14649"/>
        <dbReference type="ChEBI" id="CHEBI:15377"/>
        <dbReference type="ChEBI" id="CHEBI:15378"/>
        <dbReference type="ChEBI" id="CHEBI:57540"/>
        <dbReference type="ChEBI" id="CHEBI:456215"/>
        <dbReference type="EC" id="3.6.1.22"/>
    </reaction>
</comment>
<comment type="catalytic activity">
    <reaction evidence="1">
        <text>NADH + H2O = reduced beta-nicotinamide D-ribonucleotide + AMP + 2 H(+)</text>
        <dbReference type="Rhea" id="RHEA:48868"/>
        <dbReference type="ChEBI" id="CHEBI:15377"/>
        <dbReference type="ChEBI" id="CHEBI:15378"/>
        <dbReference type="ChEBI" id="CHEBI:57945"/>
        <dbReference type="ChEBI" id="CHEBI:90832"/>
        <dbReference type="ChEBI" id="CHEBI:456215"/>
        <dbReference type="EC" id="3.6.1.22"/>
    </reaction>
</comment>
<comment type="cofactor">
    <cofactor evidence="1">
        <name>Mg(2+)</name>
        <dbReference type="ChEBI" id="CHEBI:18420"/>
    </cofactor>
    <cofactor evidence="1">
        <name>Mn(2+)</name>
        <dbReference type="ChEBI" id="CHEBI:29035"/>
    </cofactor>
    <text evidence="1">Divalent metal cations. Mg(2+) or Mn(2+).</text>
</comment>
<comment type="cofactor">
    <cofactor evidence="1">
        <name>Zn(2+)</name>
        <dbReference type="ChEBI" id="CHEBI:29105"/>
    </cofactor>
    <text evidence="1">Binds 1 zinc ion per subunit.</text>
</comment>
<comment type="subunit">
    <text evidence="1">Homodimer.</text>
</comment>
<comment type="similarity">
    <text evidence="1">Belongs to the Nudix hydrolase family. NudC subfamily.</text>
</comment>
<dbReference type="EC" id="3.6.1.-" evidence="1"/>
<dbReference type="EC" id="3.6.1.22" evidence="1"/>
<dbReference type="EMBL" id="FM180568">
    <property type="protein sequence ID" value="CAS11851.1"/>
    <property type="molecule type" value="Genomic_DNA"/>
</dbReference>
<dbReference type="RefSeq" id="WP_000373936.1">
    <property type="nucleotide sequence ID" value="NC_011601.1"/>
</dbReference>
<dbReference type="SMR" id="B7UPF1"/>
<dbReference type="KEGG" id="ecg:E2348C_4303"/>
<dbReference type="HOGENOM" id="CLU_037162_0_1_6"/>
<dbReference type="Proteomes" id="UP000008205">
    <property type="component" value="Chromosome"/>
</dbReference>
<dbReference type="GO" id="GO:0005829">
    <property type="term" value="C:cytosol"/>
    <property type="evidence" value="ECO:0007669"/>
    <property type="project" value="TreeGrafter"/>
</dbReference>
<dbReference type="GO" id="GO:0000287">
    <property type="term" value="F:magnesium ion binding"/>
    <property type="evidence" value="ECO:0007669"/>
    <property type="project" value="UniProtKB-UniRule"/>
</dbReference>
<dbReference type="GO" id="GO:0030145">
    <property type="term" value="F:manganese ion binding"/>
    <property type="evidence" value="ECO:0007669"/>
    <property type="project" value="UniProtKB-UniRule"/>
</dbReference>
<dbReference type="GO" id="GO:0000210">
    <property type="term" value="F:NAD+ diphosphatase activity"/>
    <property type="evidence" value="ECO:0007669"/>
    <property type="project" value="UniProtKB-UniRule"/>
</dbReference>
<dbReference type="GO" id="GO:0035529">
    <property type="term" value="F:NADH pyrophosphatase activity"/>
    <property type="evidence" value="ECO:0007669"/>
    <property type="project" value="TreeGrafter"/>
</dbReference>
<dbReference type="GO" id="GO:0110153">
    <property type="term" value="F:RNA NAD-cap (NMN-forming) hydrolase activity"/>
    <property type="evidence" value="ECO:0007669"/>
    <property type="project" value="RHEA"/>
</dbReference>
<dbReference type="GO" id="GO:0008270">
    <property type="term" value="F:zinc ion binding"/>
    <property type="evidence" value="ECO:0007669"/>
    <property type="project" value="UniProtKB-UniRule"/>
</dbReference>
<dbReference type="GO" id="GO:0019677">
    <property type="term" value="P:NAD catabolic process"/>
    <property type="evidence" value="ECO:0007669"/>
    <property type="project" value="TreeGrafter"/>
</dbReference>
<dbReference type="GO" id="GO:0006734">
    <property type="term" value="P:NADH metabolic process"/>
    <property type="evidence" value="ECO:0007669"/>
    <property type="project" value="TreeGrafter"/>
</dbReference>
<dbReference type="GO" id="GO:0006742">
    <property type="term" value="P:NADP catabolic process"/>
    <property type="evidence" value="ECO:0007669"/>
    <property type="project" value="TreeGrafter"/>
</dbReference>
<dbReference type="CDD" id="cd03429">
    <property type="entry name" value="NUDIX_NADH_pyrophosphatase_Nudt13"/>
    <property type="match status" value="1"/>
</dbReference>
<dbReference type="FunFam" id="3.90.79.10:FF:000004">
    <property type="entry name" value="NADH pyrophosphatase"/>
    <property type="match status" value="1"/>
</dbReference>
<dbReference type="FunFam" id="3.90.79.20:FF:000001">
    <property type="entry name" value="NADH pyrophosphatase"/>
    <property type="match status" value="1"/>
</dbReference>
<dbReference type="Gene3D" id="3.90.79.20">
    <property type="match status" value="1"/>
</dbReference>
<dbReference type="Gene3D" id="3.90.79.10">
    <property type="entry name" value="Nucleoside Triphosphate Pyrophosphohydrolase"/>
    <property type="match status" value="1"/>
</dbReference>
<dbReference type="HAMAP" id="MF_00297">
    <property type="entry name" value="Nudix_NudC"/>
    <property type="match status" value="1"/>
</dbReference>
<dbReference type="InterPro" id="IPR050241">
    <property type="entry name" value="NAD-cap_RNA_hydrolase_NudC"/>
</dbReference>
<dbReference type="InterPro" id="IPR049734">
    <property type="entry name" value="NudC-like_C"/>
</dbReference>
<dbReference type="InterPro" id="IPR015797">
    <property type="entry name" value="NUDIX_hydrolase-like_dom_sf"/>
</dbReference>
<dbReference type="InterPro" id="IPR020084">
    <property type="entry name" value="NUDIX_hydrolase_CS"/>
</dbReference>
<dbReference type="InterPro" id="IPR000086">
    <property type="entry name" value="NUDIX_hydrolase_dom"/>
</dbReference>
<dbReference type="InterPro" id="IPR022925">
    <property type="entry name" value="RNA_Hydrolase_NudC"/>
</dbReference>
<dbReference type="InterPro" id="IPR015376">
    <property type="entry name" value="Znr_NADH_PPase"/>
</dbReference>
<dbReference type="NCBIfam" id="NF001299">
    <property type="entry name" value="PRK00241.1"/>
    <property type="match status" value="1"/>
</dbReference>
<dbReference type="PANTHER" id="PTHR42904:SF6">
    <property type="entry name" value="NAD-CAPPED RNA HYDROLASE NUDT12"/>
    <property type="match status" value="1"/>
</dbReference>
<dbReference type="PANTHER" id="PTHR42904">
    <property type="entry name" value="NUDIX HYDROLASE, NUDC SUBFAMILY"/>
    <property type="match status" value="1"/>
</dbReference>
<dbReference type="Pfam" id="PF00293">
    <property type="entry name" value="NUDIX"/>
    <property type="match status" value="1"/>
</dbReference>
<dbReference type="Pfam" id="PF09297">
    <property type="entry name" value="Zn_ribbon_NUD"/>
    <property type="match status" value="1"/>
</dbReference>
<dbReference type="SUPFAM" id="SSF55811">
    <property type="entry name" value="Nudix"/>
    <property type="match status" value="2"/>
</dbReference>
<dbReference type="PROSITE" id="PS51462">
    <property type="entry name" value="NUDIX"/>
    <property type="match status" value="1"/>
</dbReference>
<dbReference type="PROSITE" id="PS00893">
    <property type="entry name" value="NUDIX_BOX"/>
    <property type="match status" value="1"/>
</dbReference>
<gene>
    <name evidence="1" type="primary">nudC</name>
    <name type="ordered locus">E2348C_4303</name>
</gene>
<evidence type="ECO:0000255" key="1">
    <source>
        <dbReference type="HAMAP-Rule" id="MF_00297"/>
    </source>
</evidence>
<organism>
    <name type="scientific">Escherichia coli O127:H6 (strain E2348/69 / EPEC)</name>
    <dbReference type="NCBI Taxonomy" id="574521"/>
    <lineage>
        <taxon>Bacteria</taxon>
        <taxon>Pseudomonadati</taxon>
        <taxon>Pseudomonadota</taxon>
        <taxon>Gammaproteobacteria</taxon>
        <taxon>Enterobacterales</taxon>
        <taxon>Enterobacteriaceae</taxon>
        <taxon>Escherichia</taxon>
    </lineage>
</organism>
<keyword id="KW-0378">Hydrolase</keyword>
<keyword id="KW-0460">Magnesium</keyword>
<keyword id="KW-0464">Manganese</keyword>
<keyword id="KW-0479">Metal-binding</keyword>
<keyword id="KW-0520">NAD</keyword>
<keyword id="KW-1185">Reference proteome</keyword>
<keyword id="KW-0862">Zinc</keyword>